<dbReference type="GO" id="GO:0005576">
    <property type="term" value="C:extracellular region"/>
    <property type="evidence" value="ECO:0007669"/>
    <property type="project" value="UniProtKB-SubCell"/>
</dbReference>
<dbReference type="GO" id="GO:0007218">
    <property type="term" value="P:neuropeptide signaling pathway"/>
    <property type="evidence" value="ECO:0007669"/>
    <property type="project" value="UniProtKB-KW"/>
</dbReference>
<feature type="peptide" id="PRO_0000043481" description="Cydiastatin-6">
    <location>
        <begin position="1"/>
        <end position="8"/>
    </location>
</feature>
<feature type="modified residue" description="Leucine amide" evidence="1">
    <location>
        <position position="8"/>
    </location>
</feature>
<sequence>LPLYNFGL</sequence>
<name>ALL6_CYDPO</name>
<keyword id="KW-0027">Amidation</keyword>
<keyword id="KW-0903">Direct protein sequencing</keyword>
<keyword id="KW-0527">Neuropeptide</keyword>
<keyword id="KW-0964">Secreted</keyword>
<evidence type="ECO:0000269" key="1">
    <source>
    </source>
</evidence>
<evidence type="ECO:0000305" key="2"/>
<proteinExistence type="evidence at protein level"/>
<accession>P82157</accession>
<comment type="subcellular location">
    <subcellularLocation>
        <location>Secreted</location>
    </subcellularLocation>
</comment>
<comment type="similarity">
    <text evidence="2">Belongs to the allatostatin family.</text>
</comment>
<organism>
    <name type="scientific">Cydia pomonella</name>
    <name type="common">Codling moth</name>
    <dbReference type="NCBI Taxonomy" id="82600"/>
    <lineage>
        <taxon>Eukaryota</taxon>
        <taxon>Metazoa</taxon>
        <taxon>Ecdysozoa</taxon>
        <taxon>Arthropoda</taxon>
        <taxon>Hexapoda</taxon>
        <taxon>Insecta</taxon>
        <taxon>Pterygota</taxon>
        <taxon>Neoptera</taxon>
        <taxon>Endopterygota</taxon>
        <taxon>Lepidoptera</taxon>
        <taxon>Glossata</taxon>
        <taxon>Ditrysia</taxon>
        <taxon>Tortricoidea</taxon>
        <taxon>Tortricidae</taxon>
        <taxon>Olethreutinae</taxon>
        <taxon>Grapholitini</taxon>
        <taxon>Cydia</taxon>
    </lineage>
</organism>
<reference key="1">
    <citation type="journal article" date="1997" name="Peptides">
        <title>Lepidopteran peptides of the allatostatin superfamily.</title>
        <authorList>
            <person name="Duve H."/>
            <person name="Johnsen A.H."/>
            <person name="Maestro J.-L."/>
            <person name="Scott A.G."/>
            <person name="Winstanley D."/>
            <person name="Davey M."/>
            <person name="East P.D."/>
            <person name="Thorpe A."/>
        </authorList>
    </citation>
    <scope>PROTEIN SEQUENCE</scope>
    <scope>AMIDATION AT LEU-8</scope>
    <source>
        <tissue>Larva</tissue>
    </source>
</reference>
<protein>
    <recommendedName>
        <fullName>Cydiastatin-6</fullName>
    </recommendedName>
</protein>